<protein>
    <recommendedName>
        <fullName evidence="4">CC-adding tRNA nucleotidyltransferase</fullName>
        <shortName evidence="4">C-adding TNT</shortName>
        <ecNumber evidence="2">2.7.7.-</ecNumber>
    </recommendedName>
    <alternativeName>
        <fullName evidence="3">CC-adding enzyme</fullName>
    </alternativeName>
</protein>
<name>CATNT_SYNY3</name>
<feature type="chain" id="PRO_0000447571" description="CC-adding tRNA nucleotidyltransferase">
    <location>
        <begin position="1"/>
        <end position="416"/>
    </location>
</feature>
<feature type="binding site" evidence="1">
    <location>
        <begin position="31"/>
        <end position="34"/>
    </location>
    <ligand>
        <name>CTP</name>
        <dbReference type="ChEBI" id="CHEBI:37563"/>
    </ligand>
</feature>
<feature type="binding site" evidence="1">
    <location>
        <position position="46"/>
    </location>
    <ligand>
        <name>Mg(2+)</name>
        <dbReference type="ChEBI" id="CHEBI:18420"/>
    </ligand>
</feature>
<feature type="binding site" evidence="1">
    <location>
        <position position="48"/>
    </location>
    <ligand>
        <name>Mg(2+)</name>
        <dbReference type="ChEBI" id="CHEBI:18420"/>
    </ligand>
</feature>
<feature type="binding site" evidence="1">
    <location>
        <begin position="106"/>
        <end position="107"/>
    </location>
    <ligand>
        <name>CTP</name>
        <dbReference type="ChEBI" id="CHEBI:37563"/>
    </ligand>
</feature>
<feature type="binding site" evidence="1">
    <location>
        <position position="111"/>
    </location>
    <ligand>
        <name>CTP</name>
        <dbReference type="ChEBI" id="CHEBI:37563"/>
    </ligand>
</feature>
<feature type="binding site" evidence="1">
    <location>
        <begin position="148"/>
        <end position="157"/>
    </location>
    <ligand>
        <name>CTP</name>
        <dbReference type="ChEBI" id="CHEBI:37563"/>
    </ligand>
</feature>
<feature type="binding site" evidence="1">
    <location>
        <position position="188"/>
    </location>
    <ligand>
        <name>CTP</name>
        <dbReference type="ChEBI" id="CHEBI:37563"/>
    </ligand>
</feature>
<proteinExistence type="evidence at protein level"/>
<evidence type="ECO:0000250" key="1">
    <source>
        <dbReference type="UniProtKB" id="O67911"/>
    </source>
</evidence>
<evidence type="ECO:0000269" key="2">
    <source>
    </source>
</evidence>
<evidence type="ECO:0000303" key="3">
    <source>
    </source>
</evidence>
<evidence type="ECO:0000305" key="4"/>
<evidence type="ECO:0000312" key="5">
    <source>
        <dbReference type="EMBL" id="BAA10528.1"/>
    </source>
</evidence>
<reference key="1">
    <citation type="journal article" date="1996" name="DNA Res.">
        <title>Sequence analysis of the genome of the unicellular cyanobacterium Synechocystis sp. strain PCC6803. II. Sequence determination of the entire genome and assignment of potential protein-coding regions.</title>
        <authorList>
            <person name="Kaneko T."/>
            <person name="Sato S."/>
            <person name="Kotani H."/>
            <person name="Tanaka A."/>
            <person name="Asamizu E."/>
            <person name="Nakamura Y."/>
            <person name="Miyajima N."/>
            <person name="Hirosawa M."/>
            <person name="Sugiura M."/>
            <person name="Sasamoto S."/>
            <person name="Kimura T."/>
            <person name="Hosouchi T."/>
            <person name="Matsuno A."/>
            <person name="Muraki A."/>
            <person name="Nakazaki N."/>
            <person name="Naruo K."/>
            <person name="Okumura S."/>
            <person name="Shimpo S."/>
            <person name="Takeuchi C."/>
            <person name="Wada T."/>
            <person name="Watanabe A."/>
            <person name="Yamada M."/>
            <person name="Yasuda M."/>
            <person name="Tabata S."/>
        </authorList>
    </citation>
    <scope>NUCLEOTIDE SEQUENCE [LARGE SCALE GENOMIC DNA]</scope>
    <source>
        <strain>ATCC 27184 / PCC 6803 / Kazusa</strain>
    </source>
</reference>
<reference key="2">
    <citation type="journal article" date="2002" name="J. Biol. Chem.">
        <title>Closely related CC- and A-adding enzymes collaborate to construct and repair the 3'-terminal CCA of tRNA in Synechocystis sp. and Deinococcus radiodurans.</title>
        <authorList>
            <person name="Tomita K."/>
            <person name="Weiner A.M."/>
        </authorList>
    </citation>
    <scope>FUNCTION</scope>
    <scope>CATALYTIC ACTIVITY</scope>
    <source>
        <strain>ATCC 27184 / PCC 6803 / Kazusa</strain>
    </source>
</reference>
<gene>
    <name evidence="5" type="ordered locus">sll0825</name>
</gene>
<comment type="function">
    <text evidence="2">tRNA nucleotidyltransferase involved in the synthesis of the tRNA CCA terminus. Adds the two cytidine residues to tRNA.</text>
</comment>
<comment type="catalytic activity">
    <reaction evidence="2">
        <text>a tRNA precursor + 2 CTP = a tRNA with a 3' CC end + 2 diphosphate</text>
        <dbReference type="Rhea" id="RHEA:60008"/>
        <dbReference type="Rhea" id="RHEA-COMP:10465"/>
        <dbReference type="Rhea" id="RHEA-COMP:15488"/>
        <dbReference type="ChEBI" id="CHEBI:33019"/>
        <dbReference type="ChEBI" id="CHEBI:37563"/>
        <dbReference type="ChEBI" id="CHEBI:74896"/>
        <dbReference type="ChEBI" id="CHEBI:83069"/>
    </reaction>
    <physiologicalReaction direction="left-to-right" evidence="2">
        <dbReference type="Rhea" id="RHEA:60009"/>
    </physiologicalReaction>
</comment>
<comment type="cofactor">
    <cofactor evidence="1">
        <name>Mg(2+)</name>
        <dbReference type="ChEBI" id="CHEBI:18420"/>
    </cofactor>
</comment>
<comment type="similarity">
    <text evidence="4">Belongs to the tRNA nucleotidyltransferase/poly(A) polymerase family.</text>
</comment>
<dbReference type="EC" id="2.7.7.-" evidence="2"/>
<dbReference type="EMBL" id="BA000022">
    <property type="protein sequence ID" value="BAA10528.1"/>
    <property type="molecule type" value="Genomic_DNA"/>
</dbReference>
<dbReference type="PIR" id="S75793">
    <property type="entry name" value="S75793"/>
</dbReference>
<dbReference type="SMR" id="Q55428"/>
<dbReference type="STRING" id="1148.gene:10500032"/>
<dbReference type="PaxDb" id="1148-1001282"/>
<dbReference type="EnsemblBacteria" id="BAA10528">
    <property type="protein sequence ID" value="BAA10528"/>
    <property type="gene ID" value="BAA10528"/>
</dbReference>
<dbReference type="KEGG" id="syn:sll0825"/>
<dbReference type="eggNOG" id="COG0617">
    <property type="taxonomic scope" value="Bacteria"/>
</dbReference>
<dbReference type="InParanoid" id="Q55428"/>
<dbReference type="PhylomeDB" id="Q55428"/>
<dbReference type="Proteomes" id="UP000001425">
    <property type="component" value="Chromosome"/>
</dbReference>
<dbReference type="GO" id="GO:0052927">
    <property type="term" value="F:CC tRNA cytidylyltransferase activity"/>
    <property type="evidence" value="ECO:0007669"/>
    <property type="project" value="RHEA"/>
</dbReference>
<dbReference type="GO" id="GO:0160016">
    <property type="term" value="F:CCACCA tRNA nucleotidyltransferase activity"/>
    <property type="evidence" value="ECO:0000318"/>
    <property type="project" value="GO_Central"/>
</dbReference>
<dbReference type="GO" id="GO:0046872">
    <property type="term" value="F:metal ion binding"/>
    <property type="evidence" value="ECO:0007669"/>
    <property type="project" value="UniProtKB-KW"/>
</dbReference>
<dbReference type="GO" id="GO:0000166">
    <property type="term" value="F:nucleotide binding"/>
    <property type="evidence" value="ECO:0007669"/>
    <property type="project" value="UniProtKB-KW"/>
</dbReference>
<dbReference type="GO" id="GO:0000049">
    <property type="term" value="F:tRNA binding"/>
    <property type="evidence" value="ECO:0007669"/>
    <property type="project" value="UniProtKB-KW"/>
</dbReference>
<dbReference type="GO" id="GO:0001680">
    <property type="term" value="P:tRNA 3'-terminal CCA addition"/>
    <property type="evidence" value="ECO:0000318"/>
    <property type="project" value="GO_Central"/>
</dbReference>
<dbReference type="GO" id="GO:0106354">
    <property type="term" value="P:tRNA surveillance"/>
    <property type="evidence" value="ECO:0000318"/>
    <property type="project" value="GO_Central"/>
</dbReference>
<dbReference type="CDD" id="cd05398">
    <property type="entry name" value="NT_ClassII-CCAase"/>
    <property type="match status" value="1"/>
</dbReference>
<dbReference type="Gene3D" id="3.30.460.10">
    <property type="entry name" value="Beta Polymerase, domain 2"/>
    <property type="match status" value="1"/>
</dbReference>
<dbReference type="Gene3D" id="1.10.3090.10">
    <property type="entry name" value="cca-adding enzyme, domain 2"/>
    <property type="match status" value="1"/>
</dbReference>
<dbReference type="InterPro" id="IPR032810">
    <property type="entry name" value="CCA-adding_enz_C"/>
</dbReference>
<dbReference type="InterPro" id="IPR043519">
    <property type="entry name" value="NT_sf"/>
</dbReference>
<dbReference type="InterPro" id="IPR002646">
    <property type="entry name" value="PolA_pol_head_dom"/>
</dbReference>
<dbReference type="InterPro" id="IPR032828">
    <property type="entry name" value="PolyA_RNA-bd"/>
</dbReference>
<dbReference type="InterPro" id="IPR050124">
    <property type="entry name" value="tRNA_CCA-adding_enzyme"/>
</dbReference>
<dbReference type="PANTHER" id="PTHR47545:SF2">
    <property type="entry name" value="CC-ADDING TRNA NUCLEOTIDYLTRANSFERASE"/>
    <property type="match status" value="1"/>
</dbReference>
<dbReference type="PANTHER" id="PTHR47545">
    <property type="entry name" value="MULTIFUNCTIONAL CCA PROTEIN"/>
    <property type="match status" value="1"/>
</dbReference>
<dbReference type="Pfam" id="PF01743">
    <property type="entry name" value="PolyA_pol"/>
    <property type="match status" value="1"/>
</dbReference>
<dbReference type="Pfam" id="PF12627">
    <property type="entry name" value="PolyA_pol_RNAbd"/>
    <property type="match status" value="1"/>
</dbReference>
<dbReference type="Pfam" id="PF13735">
    <property type="entry name" value="tRNA_NucTran2_2"/>
    <property type="match status" value="1"/>
</dbReference>
<dbReference type="SUPFAM" id="SSF81301">
    <property type="entry name" value="Nucleotidyltransferase"/>
    <property type="match status" value="1"/>
</dbReference>
<dbReference type="SUPFAM" id="SSF81891">
    <property type="entry name" value="Poly A polymerase C-terminal region-like"/>
    <property type="match status" value="1"/>
</dbReference>
<sequence length="416" mass="46388">MLCPVSHLADLRQQVPFDLALLPPQACLVGGAVRDALLGRRREYLDWDFVVPSGAIETASAIASRYRAGFVVLDKARHIARVVFAHGTVDFAQQEGMSLEQDLARRDFTVNAIAYNFQQNKLIDPMAGVGDLQRGQLKMVAAVNLADDPLRLLRAYRQAAQLQFTLDPDTRTVLRELAPRIKTVAAERVQAEFNYLLGSPRGSQWLLAAWQDGILAHWFSHANLSSLNAIGCIDLAIAAIKNQLTLVERQQFFQALGKKGIAIAKLASLVCADVKIAEGELQRLKYSRHELRSVQAILQGYPQLSCLENSPTVRQLYFFFVELGKYLPHFVLYALAHCPHNYHSFIFELLTHYLNSGDRLAHPQPLITGKDLIDKLHIKPSPLIGQLLTEINIAHIEGKISNEQEALAYAQELGKS</sequence>
<organism>
    <name type="scientific">Synechocystis sp. (strain ATCC 27184 / PCC 6803 / Kazusa)</name>
    <dbReference type="NCBI Taxonomy" id="1111708"/>
    <lineage>
        <taxon>Bacteria</taxon>
        <taxon>Bacillati</taxon>
        <taxon>Cyanobacteriota</taxon>
        <taxon>Cyanophyceae</taxon>
        <taxon>Synechococcales</taxon>
        <taxon>Merismopediaceae</taxon>
        <taxon>Synechocystis</taxon>
    </lineage>
</organism>
<keyword id="KW-0460">Magnesium</keyword>
<keyword id="KW-0479">Metal-binding</keyword>
<keyword id="KW-0547">Nucleotide-binding</keyword>
<keyword id="KW-0548">Nucleotidyltransferase</keyword>
<keyword id="KW-1185">Reference proteome</keyword>
<keyword id="KW-0694">RNA-binding</keyword>
<keyword id="KW-0808">Transferase</keyword>
<keyword id="KW-0819">tRNA processing</keyword>
<keyword id="KW-0820">tRNA-binding</keyword>
<accession>Q55428</accession>